<reference key="1">
    <citation type="journal article" date="1998" name="Science">
        <title>Genome sequence of the nematode C. elegans: a platform for investigating biology.</title>
        <authorList>
            <consortium name="The C. elegans sequencing consortium"/>
        </authorList>
    </citation>
    <scope>NUCLEOTIDE SEQUENCE [LARGE SCALE GENOMIC DNA]</scope>
    <source>
        <strain>Bristol N2</strain>
    </source>
</reference>
<name>YBWL_CAEEL</name>
<organism>
    <name type="scientific">Caenorhabditis elegans</name>
    <dbReference type="NCBI Taxonomy" id="6239"/>
    <lineage>
        <taxon>Eukaryota</taxon>
        <taxon>Metazoa</taxon>
        <taxon>Ecdysozoa</taxon>
        <taxon>Nematoda</taxon>
        <taxon>Chromadorea</taxon>
        <taxon>Rhabditida</taxon>
        <taxon>Rhabditina</taxon>
        <taxon>Rhabditomorpha</taxon>
        <taxon>Rhabditoidea</taxon>
        <taxon>Rhabditidae</taxon>
        <taxon>Peloderinae</taxon>
        <taxon>Caenorhabditis</taxon>
    </lineage>
</organism>
<protein>
    <recommendedName>
        <fullName>Putative protein C31H2.4</fullName>
    </recommendedName>
</protein>
<accession>Q18347</accession>
<comment type="cofactor">
    <cofactor evidence="1">
        <name>Fe cation</name>
        <dbReference type="ChEBI" id="CHEBI:24875"/>
    </cofactor>
    <text evidence="1">Binds 1 Fe cation per subunit.</text>
</comment>
<comment type="similarity">
    <text evidence="3">Belongs to the 4HPPD family.</text>
</comment>
<feature type="chain" id="PRO_0000088415" description="Putative protein C31H2.4">
    <location>
        <begin position="1"/>
        <end position="364"/>
    </location>
</feature>
<feature type="domain" description="VOC 1" evidence="2">
    <location>
        <begin position="6"/>
        <end position="134"/>
    </location>
</feature>
<feature type="domain" description="VOC 2" evidence="2">
    <location>
        <begin position="161"/>
        <end position="320"/>
    </location>
</feature>
<feature type="binding site" evidence="1">
    <location>
        <position position="164"/>
    </location>
    <ligand>
        <name>Fe cation</name>
        <dbReference type="ChEBI" id="CHEBI:24875"/>
    </ligand>
</feature>
<feature type="binding site" evidence="1">
    <location>
        <position position="248"/>
    </location>
    <ligand>
        <name>Fe cation</name>
        <dbReference type="ChEBI" id="CHEBI:24875"/>
    </ligand>
</feature>
<feature type="binding site" evidence="1">
    <location>
        <position position="331"/>
    </location>
    <ligand>
        <name>Fe cation</name>
        <dbReference type="ChEBI" id="CHEBI:24875"/>
    </ligand>
</feature>
<evidence type="ECO:0000250" key="1"/>
<evidence type="ECO:0000255" key="2">
    <source>
        <dbReference type="PROSITE-ProRule" id="PRU01163"/>
    </source>
</evidence>
<evidence type="ECO:0000305" key="3"/>
<dbReference type="EMBL" id="FO080741">
    <property type="protein sequence ID" value="CCD66332.1"/>
    <property type="molecule type" value="Genomic_DNA"/>
</dbReference>
<dbReference type="PIR" id="T30084">
    <property type="entry name" value="T30084"/>
</dbReference>
<dbReference type="RefSeq" id="NP_508875.1">
    <property type="nucleotide sequence ID" value="NM_076474.3"/>
</dbReference>
<dbReference type="SMR" id="Q18347"/>
<dbReference type="BioGRID" id="47934">
    <property type="interactions" value="1"/>
</dbReference>
<dbReference type="FunCoup" id="Q18347">
    <property type="interactions" value="126"/>
</dbReference>
<dbReference type="STRING" id="6239.C31H2.4.1"/>
<dbReference type="PaxDb" id="6239-C31H2.4"/>
<dbReference type="PeptideAtlas" id="Q18347"/>
<dbReference type="EnsemblMetazoa" id="C31H2.4.1">
    <property type="protein sequence ID" value="C31H2.4.1"/>
    <property type="gene ID" value="WBGene00016294"/>
</dbReference>
<dbReference type="GeneID" id="183101"/>
<dbReference type="KEGG" id="cel:CELE_C31H2.4"/>
<dbReference type="UCSC" id="C31H2.4">
    <property type="organism name" value="c. elegans"/>
</dbReference>
<dbReference type="AGR" id="WB:WBGene00016294"/>
<dbReference type="CTD" id="183101"/>
<dbReference type="WormBase" id="C31H2.4">
    <property type="protein sequence ID" value="CE04132"/>
    <property type="gene ID" value="WBGene00016294"/>
</dbReference>
<dbReference type="eggNOG" id="KOG0638">
    <property type="taxonomic scope" value="Eukaryota"/>
</dbReference>
<dbReference type="GeneTree" id="ENSGT00530000063474"/>
<dbReference type="HOGENOM" id="CLU_034004_3_1_1"/>
<dbReference type="InParanoid" id="Q18347"/>
<dbReference type="OMA" id="DHVVQNY"/>
<dbReference type="OrthoDB" id="414569at2759"/>
<dbReference type="PhylomeDB" id="Q18347"/>
<dbReference type="Reactome" id="R-CEL-8963684">
    <property type="pathway name" value="Tyrosine catabolism"/>
</dbReference>
<dbReference type="PRO" id="PR:Q18347"/>
<dbReference type="Proteomes" id="UP000001940">
    <property type="component" value="Chromosome X"/>
</dbReference>
<dbReference type="Bgee" id="WBGene00016294">
    <property type="expression patterns" value="Expressed in embryo and 4 other cell types or tissues"/>
</dbReference>
<dbReference type="GO" id="GO:0005789">
    <property type="term" value="C:endoplasmic reticulum membrane"/>
    <property type="evidence" value="ECO:0000318"/>
    <property type="project" value="GO_Central"/>
</dbReference>
<dbReference type="GO" id="GO:0000139">
    <property type="term" value="C:Golgi membrane"/>
    <property type="evidence" value="ECO:0000318"/>
    <property type="project" value="GO_Central"/>
</dbReference>
<dbReference type="GO" id="GO:0003868">
    <property type="term" value="F:4-hydroxyphenylpyruvate dioxygenase activity"/>
    <property type="evidence" value="ECO:0000318"/>
    <property type="project" value="GO_Central"/>
</dbReference>
<dbReference type="GO" id="GO:0046872">
    <property type="term" value="F:metal ion binding"/>
    <property type="evidence" value="ECO:0007669"/>
    <property type="project" value="UniProtKB-KW"/>
</dbReference>
<dbReference type="GO" id="GO:0006572">
    <property type="term" value="P:tyrosine catabolic process"/>
    <property type="evidence" value="ECO:0000318"/>
    <property type="project" value="GO_Central"/>
</dbReference>
<dbReference type="CDD" id="cd07250">
    <property type="entry name" value="HPPD_C_like"/>
    <property type="match status" value="1"/>
</dbReference>
<dbReference type="CDD" id="cd08342">
    <property type="entry name" value="HPPD_N_like"/>
    <property type="match status" value="1"/>
</dbReference>
<dbReference type="FunFam" id="3.10.180.10:FF:000001">
    <property type="entry name" value="4-hydroxyphenylpyruvate dioxygenase"/>
    <property type="match status" value="1"/>
</dbReference>
<dbReference type="Gene3D" id="3.10.180.10">
    <property type="entry name" value="2,3-Dihydroxybiphenyl 1,2-Dioxygenase, domain 1"/>
    <property type="match status" value="2"/>
</dbReference>
<dbReference type="InterPro" id="IPR005956">
    <property type="entry name" value="4OHPhenylPyrv_dOase"/>
</dbReference>
<dbReference type="InterPro" id="IPR041735">
    <property type="entry name" value="4OHPhenylPyrv_dOase_C"/>
</dbReference>
<dbReference type="InterPro" id="IPR041736">
    <property type="entry name" value="4OHPhenylPyrv_dOase_N"/>
</dbReference>
<dbReference type="InterPro" id="IPR029068">
    <property type="entry name" value="Glyas_Bleomycin-R_OHBP_Dase"/>
</dbReference>
<dbReference type="InterPro" id="IPR004360">
    <property type="entry name" value="Glyas_Fos-R_dOase_dom"/>
</dbReference>
<dbReference type="InterPro" id="IPR037523">
    <property type="entry name" value="VOC"/>
</dbReference>
<dbReference type="NCBIfam" id="TIGR01263">
    <property type="entry name" value="4HPPD"/>
    <property type="match status" value="1"/>
</dbReference>
<dbReference type="PANTHER" id="PTHR11959">
    <property type="entry name" value="4-HYDROXYPHENYLPYRUVATE DIOXYGENASE"/>
    <property type="match status" value="1"/>
</dbReference>
<dbReference type="PANTHER" id="PTHR11959:SF3">
    <property type="entry name" value="PROTEIN C31H2.4-RELATED"/>
    <property type="match status" value="1"/>
</dbReference>
<dbReference type="Pfam" id="PF00903">
    <property type="entry name" value="Glyoxalase"/>
    <property type="match status" value="2"/>
</dbReference>
<dbReference type="PIRSF" id="PIRSF009283">
    <property type="entry name" value="HPP_dOase"/>
    <property type="match status" value="1"/>
</dbReference>
<dbReference type="SUPFAM" id="SSF54593">
    <property type="entry name" value="Glyoxalase/Bleomycin resistance protein/Dihydroxybiphenyl dioxygenase"/>
    <property type="match status" value="1"/>
</dbReference>
<dbReference type="PROSITE" id="PS51819">
    <property type="entry name" value="VOC"/>
    <property type="match status" value="2"/>
</dbReference>
<gene>
    <name type="ORF">C31H2.4</name>
</gene>
<proteinExistence type="inferred from homology"/>
<keyword id="KW-0408">Iron</keyword>
<keyword id="KW-0479">Metal-binding</keyword>
<keyword id="KW-1185">Reference proteome</keyword>
<keyword id="KW-0677">Repeat</keyword>
<sequence>MGSISAIHHIEFIVSNALQSAYWYCSGFGFEKFAEKITDESTSIALRNGTARVIITSYNSQNIYTDQLIKHGDFIKDVSFRVDNLDAVLQNLVENDIKVIQQSEVSTKDGLVRTATLLSEGGDVTHTLFELGEFKGNFLPFFTPISNFELFENIEKMPAILMDHVVQNYPIGEMEAAADWYFKTMRLKRFWSVDDKVATSEFSAMTAWLLVNDDHTVQVTLAEGVKGRKGKSQIEEFINYHGGSGVQHFALLVEDIISAVQIMKSRSVEFLTIPSQYYDNLEERLSKTNLIVKEDLKMIRELNILMDFDENGYLLQIFSKPLQDRPTLFIEIIQRANFKGFGAGNFKALFDAVEREQEKRGTLF</sequence>